<proteinExistence type="evidence at transcript level"/>
<comment type="function">
    <text evidence="1">Histone methyltransferase that dimethylates histone H3 at 'Arg-17', forming asymmetric dimethylarginine (H3R17me2a), leading to activate transcription via chromatin remodeling.</text>
</comment>
<comment type="catalytic activity">
    <reaction evidence="1">
        <text>L-arginyl-[protein] + 2 S-adenosyl-L-methionine = N(omega),N(omega)-dimethyl-L-arginyl-[protein] + 2 S-adenosyl-L-homocysteine + 2 H(+)</text>
        <dbReference type="Rhea" id="RHEA:48096"/>
        <dbReference type="Rhea" id="RHEA-COMP:10532"/>
        <dbReference type="Rhea" id="RHEA-COMP:11991"/>
        <dbReference type="ChEBI" id="CHEBI:15378"/>
        <dbReference type="ChEBI" id="CHEBI:29965"/>
        <dbReference type="ChEBI" id="CHEBI:57856"/>
        <dbReference type="ChEBI" id="CHEBI:59789"/>
        <dbReference type="ChEBI" id="CHEBI:61897"/>
        <dbReference type="EC" id="2.1.1.319"/>
    </reaction>
    <physiologicalReaction direction="left-to-right" evidence="1">
        <dbReference type="Rhea" id="RHEA:48097"/>
    </physiologicalReaction>
</comment>
<comment type="subcellular location">
    <subcellularLocation>
        <location evidence="1">Nucleus</location>
    </subcellularLocation>
    <subcellularLocation>
        <location evidence="1">Cytoplasm</location>
    </subcellularLocation>
</comment>
<comment type="similarity">
    <text evidence="2">Belongs to the methyltransferase superfamily. METTL23 family.</text>
</comment>
<accession>Q6DJF8</accession>
<evidence type="ECO:0000250" key="1">
    <source>
        <dbReference type="UniProtKB" id="A2AA28"/>
    </source>
</evidence>
<evidence type="ECO:0000305" key="2"/>
<reference key="1">
    <citation type="submission" date="2004-06" db="EMBL/GenBank/DDBJ databases">
        <authorList>
            <consortium name="NIH - Xenopus Gene Collection (XGC) project"/>
        </authorList>
    </citation>
    <scope>NUCLEOTIDE SEQUENCE [LARGE SCALE MRNA]</scope>
    <source>
        <tissue>Eye</tissue>
    </source>
</reference>
<name>MET23_XENLA</name>
<protein>
    <recommendedName>
        <fullName evidence="2">Histone-arginine methyltransferase METTL23</fullName>
        <ecNumber evidence="1">2.1.1.319</ecNumber>
    </recommendedName>
    <alternativeName>
        <fullName evidence="2">Methyltransferase-like protein 23</fullName>
    </alternativeName>
</protein>
<sequence>MGEENEQRIGERVYEFLRREGKDEQKMRVTIPEVLNCQYGMYVWPCAVVLAQYLWYHRKNLADKRVLEVGAGVSLPGILAAKCGAKVILSDSAEMPQCLENCRRSCKMNNIVGVPVIGLTWGEVSPDLLDLPPIDIILGSDVFYEPKDFEDILLTVRFLMERMPQAEFWTTYQVRSADWSVEALLCKWNLKCTNVPLKTFDADNECLAGSELPGRHTVQMMIITLDRKGAGHTG</sequence>
<organism>
    <name type="scientific">Xenopus laevis</name>
    <name type="common">African clawed frog</name>
    <dbReference type="NCBI Taxonomy" id="8355"/>
    <lineage>
        <taxon>Eukaryota</taxon>
        <taxon>Metazoa</taxon>
        <taxon>Chordata</taxon>
        <taxon>Craniata</taxon>
        <taxon>Vertebrata</taxon>
        <taxon>Euteleostomi</taxon>
        <taxon>Amphibia</taxon>
        <taxon>Batrachia</taxon>
        <taxon>Anura</taxon>
        <taxon>Pipoidea</taxon>
        <taxon>Pipidae</taxon>
        <taxon>Xenopodinae</taxon>
        <taxon>Xenopus</taxon>
        <taxon>Xenopus</taxon>
    </lineage>
</organism>
<gene>
    <name type="primary">mettl23</name>
</gene>
<feature type="chain" id="PRO_0000321523" description="Histone-arginine methyltransferase METTL23">
    <location>
        <begin position="1"/>
        <end position="234"/>
    </location>
</feature>
<dbReference type="EC" id="2.1.1.319" evidence="1"/>
<dbReference type="EMBL" id="BC075221">
    <property type="protein sequence ID" value="AAH75221.1"/>
    <property type="molecule type" value="mRNA"/>
</dbReference>
<dbReference type="RefSeq" id="NP_001086389.1">
    <property type="nucleotide sequence ID" value="NM_001092920.1"/>
</dbReference>
<dbReference type="SMR" id="Q6DJF8"/>
<dbReference type="DNASU" id="444818"/>
<dbReference type="GeneID" id="444818"/>
<dbReference type="KEGG" id="xla:444818"/>
<dbReference type="AGR" id="Xenbase:XB-GENE-6254166"/>
<dbReference type="CTD" id="444818"/>
<dbReference type="OMA" id="VIGITWG"/>
<dbReference type="OrthoDB" id="407325at2759"/>
<dbReference type="Proteomes" id="UP000186698">
    <property type="component" value="Chromosome 9_10S"/>
</dbReference>
<dbReference type="Bgee" id="444818">
    <property type="expression patterns" value="Expressed in brain and 19 other cell types or tissues"/>
</dbReference>
<dbReference type="GO" id="GO:0005737">
    <property type="term" value="C:cytoplasm"/>
    <property type="evidence" value="ECO:0000250"/>
    <property type="project" value="UniProtKB"/>
</dbReference>
<dbReference type="GO" id="GO:0005634">
    <property type="term" value="C:nucleus"/>
    <property type="evidence" value="ECO:0000250"/>
    <property type="project" value="UniProtKB"/>
</dbReference>
<dbReference type="GO" id="GO:0035642">
    <property type="term" value="F:histone H3R17 methyltransferase activity"/>
    <property type="evidence" value="ECO:0000250"/>
    <property type="project" value="UniProtKB"/>
</dbReference>
<dbReference type="GO" id="GO:0035242">
    <property type="term" value="F:protein-arginine omega-N asymmetric methyltransferase activity"/>
    <property type="evidence" value="ECO:0007669"/>
    <property type="project" value="RHEA"/>
</dbReference>
<dbReference type="GO" id="GO:0040029">
    <property type="term" value="P:epigenetic regulation of gene expression"/>
    <property type="evidence" value="ECO:0000318"/>
    <property type="project" value="GO_Central"/>
</dbReference>
<dbReference type="GO" id="GO:0032259">
    <property type="term" value="P:methylation"/>
    <property type="evidence" value="ECO:0007669"/>
    <property type="project" value="UniProtKB-KW"/>
</dbReference>
<dbReference type="Gene3D" id="3.40.50.150">
    <property type="entry name" value="Vaccinia Virus protein VP39"/>
    <property type="match status" value="1"/>
</dbReference>
<dbReference type="InterPro" id="IPR019410">
    <property type="entry name" value="Methyltransf_16"/>
</dbReference>
<dbReference type="InterPro" id="IPR029063">
    <property type="entry name" value="SAM-dependent_MTases_sf"/>
</dbReference>
<dbReference type="PANTHER" id="PTHR14614">
    <property type="entry name" value="HEPATOCELLULAR CARCINOMA-ASSOCIATED ANTIGEN"/>
    <property type="match status" value="1"/>
</dbReference>
<dbReference type="PANTHER" id="PTHR14614:SF164">
    <property type="entry name" value="HISTONE-ARGININE METHYLTRANSFERASE METTL23"/>
    <property type="match status" value="1"/>
</dbReference>
<dbReference type="Pfam" id="PF10294">
    <property type="entry name" value="Methyltransf_16"/>
    <property type="match status" value="1"/>
</dbReference>
<dbReference type="SUPFAM" id="SSF53335">
    <property type="entry name" value="S-adenosyl-L-methionine-dependent methyltransferases"/>
    <property type="match status" value="1"/>
</dbReference>
<keyword id="KW-0156">Chromatin regulator</keyword>
<keyword id="KW-0963">Cytoplasm</keyword>
<keyword id="KW-0489">Methyltransferase</keyword>
<keyword id="KW-0539">Nucleus</keyword>
<keyword id="KW-1185">Reference proteome</keyword>
<keyword id="KW-0949">S-adenosyl-L-methionine</keyword>
<keyword id="KW-0808">Transferase</keyword>